<gene>
    <name evidence="1" type="primary">ndhH1</name>
    <name type="ordered locus">glr2372</name>
</gene>
<comment type="function">
    <text evidence="1">NDH-1 shuttles electrons from an unknown electron donor, via FMN and iron-sulfur (Fe-S) centers, to quinones in the respiratory and/or the photosynthetic chain. The immediate electron acceptor for the enzyme in this species is believed to be plastoquinone. Couples the redox reaction to proton translocation, and thus conserves the redox energy in a proton gradient. Cyanobacterial NDH-1 also plays a role in inorganic carbon-concentration.</text>
</comment>
<comment type="catalytic activity">
    <reaction evidence="1">
        <text>a plastoquinone + NADH + (n+1) H(+)(in) = a plastoquinol + NAD(+) + n H(+)(out)</text>
        <dbReference type="Rhea" id="RHEA:42608"/>
        <dbReference type="Rhea" id="RHEA-COMP:9561"/>
        <dbReference type="Rhea" id="RHEA-COMP:9562"/>
        <dbReference type="ChEBI" id="CHEBI:15378"/>
        <dbReference type="ChEBI" id="CHEBI:17757"/>
        <dbReference type="ChEBI" id="CHEBI:57540"/>
        <dbReference type="ChEBI" id="CHEBI:57945"/>
        <dbReference type="ChEBI" id="CHEBI:62192"/>
    </reaction>
</comment>
<comment type="catalytic activity">
    <reaction evidence="1">
        <text>a plastoquinone + NADPH + (n+1) H(+)(in) = a plastoquinol + NADP(+) + n H(+)(out)</text>
        <dbReference type="Rhea" id="RHEA:42612"/>
        <dbReference type="Rhea" id="RHEA-COMP:9561"/>
        <dbReference type="Rhea" id="RHEA-COMP:9562"/>
        <dbReference type="ChEBI" id="CHEBI:15378"/>
        <dbReference type="ChEBI" id="CHEBI:17757"/>
        <dbReference type="ChEBI" id="CHEBI:57783"/>
        <dbReference type="ChEBI" id="CHEBI:58349"/>
        <dbReference type="ChEBI" id="CHEBI:62192"/>
    </reaction>
</comment>
<comment type="subunit">
    <text evidence="1">NDH-1 can be composed of about 15 different subunits; different subcomplexes with different compositions have been identified which probably have different functions.</text>
</comment>
<comment type="subcellular location">
    <subcellularLocation>
        <location evidence="1">Cell inner membrane</location>
        <topology evidence="1">Peripheral membrane protein</topology>
        <orientation evidence="1">Cytoplasmic side</orientation>
    </subcellularLocation>
</comment>
<comment type="similarity">
    <text evidence="1">Belongs to the complex I 49 kDa subunit family.</text>
</comment>
<proteinExistence type="inferred from homology"/>
<reference key="1">
    <citation type="journal article" date="2003" name="DNA Res.">
        <title>Complete genome structure of Gloeobacter violaceus PCC 7421, a cyanobacterium that lacks thylakoids.</title>
        <authorList>
            <person name="Nakamura Y."/>
            <person name="Kaneko T."/>
            <person name="Sato S."/>
            <person name="Mimuro M."/>
            <person name="Miyashita H."/>
            <person name="Tsuchiya T."/>
            <person name="Sasamoto S."/>
            <person name="Watanabe A."/>
            <person name="Kawashima K."/>
            <person name="Kishida Y."/>
            <person name="Kiyokawa C."/>
            <person name="Kohara M."/>
            <person name="Matsumoto M."/>
            <person name="Matsuno A."/>
            <person name="Nakazaki N."/>
            <person name="Shimpo S."/>
            <person name="Takeuchi C."/>
            <person name="Yamada M."/>
            <person name="Tabata S."/>
        </authorList>
    </citation>
    <scope>NUCLEOTIDE SEQUENCE [LARGE SCALE GENOMIC DNA]</scope>
    <source>
        <strain>ATCC 29082 / PCC 7421</strain>
    </source>
</reference>
<protein>
    <recommendedName>
        <fullName evidence="1">NAD(P)H-quinone oxidoreductase subunit H 1</fullName>
        <ecNumber evidence="1">7.1.1.-</ecNumber>
    </recommendedName>
    <alternativeName>
        <fullName>NAD(P)H dehydrogenase subunit H 1</fullName>
    </alternativeName>
    <alternativeName>
        <fullName evidence="1">NADH-plastoquinone oxidoreductase subunit H 1</fullName>
    </alternativeName>
    <alternativeName>
        <fullName evidence="1">NDH-1 subunit H 1</fullName>
        <shortName evidence="1">NDH-H 1</shortName>
    </alternativeName>
</protein>
<dbReference type="EC" id="7.1.1.-" evidence="1"/>
<dbReference type="EMBL" id="BA000045">
    <property type="protein sequence ID" value="BAC90313.1"/>
    <property type="molecule type" value="Genomic_DNA"/>
</dbReference>
<dbReference type="RefSeq" id="NP_925318.1">
    <property type="nucleotide sequence ID" value="NC_005125.1"/>
</dbReference>
<dbReference type="RefSeq" id="WP_011142368.1">
    <property type="nucleotide sequence ID" value="NC_005125.1"/>
</dbReference>
<dbReference type="SMR" id="Q7NI12"/>
<dbReference type="FunCoup" id="Q7NI12">
    <property type="interactions" value="229"/>
</dbReference>
<dbReference type="STRING" id="251221.gene:10759869"/>
<dbReference type="EnsemblBacteria" id="BAC90313">
    <property type="protein sequence ID" value="BAC90313"/>
    <property type="gene ID" value="BAC90313"/>
</dbReference>
<dbReference type="KEGG" id="gvi:glr2372"/>
<dbReference type="PATRIC" id="fig|251221.4.peg.2411"/>
<dbReference type="eggNOG" id="COG0649">
    <property type="taxonomic scope" value="Bacteria"/>
</dbReference>
<dbReference type="HOGENOM" id="CLU_015134_1_2_3"/>
<dbReference type="InParanoid" id="Q7NI12"/>
<dbReference type="OrthoDB" id="9801496at2"/>
<dbReference type="PhylomeDB" id="Q7NI12"/>
<dbReference type="Proteomes" id="UP000000557">
    <property type="component" value="Chromosome"/>
</dbReference>
<dbReference type="GO" id="GO:0005886">
    <property type="term" value="C:plasma membrane"/>
    <property type="evidence" value="ECO:0007669"/>
    <property type="project" value="UniProtKB-SubCell"/>
</dbReference>
<dbReference type="GO" id="GO:0051287">
    <property type="term" value="F:NAD binding"/>
    <property type="evidence" value="ECO:0007669"/>
    <property type="project" value="InterPro"/>
</dbReference>
<dbReference type="GO" id="GO:0016655">
    <property type="term" value="F:oxidoreductase activity, acting on NAD(P)H, quinone or similar compound as acceptor"/>
    <property type="evidence" value="ECO:0007669"/>
    <property type="project" value="UniProtKB-UniRule"/>
</dbReference>
<dbReference type="GO" id="GO:0048038">
    <property type="term" value="F:quinone binding"/>
    <property type="evidence" value="ECO:0007669"/>
    <property type="project" value="UniProtKB-KW"/>
</dbReference>
<dbReference type="GO" id="GO:0019684">
    <property type="term" value="P:photosynthesis, light reaction"/>
    <property type="evidence" value="ECO:0007669"/>
    <property type="project" value="UniProtKB-UniRule"/>
</dbReference>
<dbReference type="Gene3D" id="1.10.645.10">
    <property type="entry name" value="Cytochrome-c3 Hydrogenase, chain B"/>
    <property type="match status" value="1"/>
</dbReference>
<dbReference type="HAMAP" id="MF_01358">
    <property type="entry name" value="NDH1_NuoD"/>
    <property type="match status" value="1"/>
</dbReference>
<dbReference type="InterPro" id="IPR001135">
    <property type="entry name" value="NADH_Q_OxRdtase_suD"/>
</dbReference>
<dbReference type="InterPro" id="IPR022885">
    <property type="entry name" value="NDH1_su_D/H"/>
</dbReference>
<dbReference type="InterPro" id="IPR029014">
    <property type="entry name" value="NiFe-Hase_large"/>
</dbReference>
<dbReference type="NCBIfam" id="TIGR01962">
    <property type="entry name" value="NuoD"/>
    <property type="match status" value="1"/>
</dbReference>
<dbReference type="NCBIfam" id="NF004739">
    <property type="entry name" value="PRK06075.1"/>
    <property type="match status" value="1"/>
</dbReference>
<dbReference type="NCBIfam" id="NF005649">
    <property type="entry name" value="PRK07415.1"/>
    <property type="match status" value="1"/>
</dbReference>
<dbReference type="PANTHER" id="PTHR11993:SF10">
    <property type="entry name" value="NADH DEHYDROGENASE [UBIQUINONE] IRON-SULFUR PROTEIN 2, MITOCHONDRIAL"/>
    <property type="match status" value="1"/>
</dbReference>
<dbReference type="PANTHER" id="PTHR11993">
    <property type="entry name" value="NADH-UBIQUINONE OXIDOREDUCTASE 49 KDA SUBUNIT"/>
    <property type="match status" value="1"/>
</dbReference>
<dbReference type="Pfam" id="PF00346">
    <property type="entry name" value="Complex1_49kDa"/>
    <property type="match status" value="1"/>
</dbReference>
<dbReference type="SUPFAM" id="SSF56762">
    <property type="entry name" value="HydB/Nqo4-like"/>
    <property type="match status" value="1"/>
</dbReference>
<name>NDHH1_GLOVI</name>
<sequence>MSMLETRAERMVINLGPHHPSMHGVLRLIVTLDGENVVDCVPVLGYLHRSMEKIAESRTIIQYLPYVTRWDYLATMFTEAITVNAPEQLAGVQVPRRARYIRVIMLELSRIASHLLWLGPFMADIGATSPFFYIFREREMIYDLFEAATGMRMMHNYFRVGGVAVDLPYGWVDKARDFCNYLPPKIDEYERLITNNPIFRGRVEGLGYIGREDAINWGLSGPMLRASGVNWDLRKVDHYEIYDELDWNVAWDTGGDTLARYVVRIQEMRESVKMIRQALDQLPGGPYENLEAQRLSGGPKSEWNGFDYQFIGKKSSPTFKMPRGEHYVRVEAPKGELGVYLIGDDSTFPWRWKIRPPGFINLAVLPKLVQGTKLADLMAILGSVDIIMGEVDR</sequence>
<organism>
    <name type="scientific">Gloeobacter violaceus (strain ATCC 29082 / PCC 7421)</name>
    <dbReference type="NCBI Taxonomy" id="251221"/>
    <lineage>
        <taxon>Bacteria</taxon>
        <taxon>Bacillati</taxon>
        <taxon>Cyanobacteriota</taxon>
        <taxon>Cyanophyceae</taxon>
        <taxon>Gloeobacterales</taxon>
        <taxon>Gloeobacteraceae</taxon>
        <taxon>Gloeobacter</taxon>
    </lineage>
</organism>
<keyword id="KW-0997">Cell inner membrane</keyword>
<keyword id="KW-1003">Cell membrane</keyword>
<keyword id="KW-0472">Membrane</keyword>
<keyword id="KW-0520">NAD</keyword>
<keyword id="KW-0521">NADP</keyword>
<keyword id="KW-0618">Plastoquinone</keyword>
<keyword id="KW-0874">Quinone</keyword>
<keyword id="KW-1185">Reference proteome</keyword>
<keyword id="KW-1278">Translocase</keyword>
<keyword id="KW-0813">Transport</keyword>
<feature type="chain" id="PRO_0000357826" description="NAD(P)H-quinone oxidoreductase subunit H 1">
    <location>
        <begin position="1"/>
        <end position="393"/>
    </location>
</feature>
<accession>Q7NI12</accession>
<evidence type="ECO:0000255" key="1">
    <source>
        <dbReference type="HAMAP-Rule" id="MF_01358"/>
    </source>
</evidence>